<protein>
    <recommendedName>
        <fullName>Regulatory protein RecX</fullName>
    </recommendedName>
</protein>
<reference key="1">
    <citation type="journal article" date="2001" name="Science">
        <title>Comparative genomics of Listeria species.</title>
        <authorList>
            <person name="Glaser P."/>
            <person name="Frangeul L."/>
            <person name="Buchrieser C."/>
            <person name="Rusniok C."/>
            <person name="Amend A."/>
            <person name="Baquero F."/>
            <person name="Berche P."/>
            <person name="Bloecker H."/>
            <person name="Brandt P."/>
            <person name="Chakraborty T."/>
            <person name="Charbit A."/>
            <person name="Chetouani F."/>
            <person name="Couve E."/>
            <person name="de Daruvar A."/>
            <person name="Dehoux P."/>
            <person name="Domann E."/>
            <person name="Dominguez-Bernal G."/>
            <person name="Duchaud E."/>
            <person name="Durant L."/>
            <person name="Dussurget O."/>
            <person name="Entian K.-D."/>
            <person name="Fsihi H."/>
            <person name="Garcia-del Portillo F."/>
            <person name="Garrido P."/>
            <person name="Gautier L."/>
            <person name="Goebel W."/>
            <person name="Gomez-Lopez N."/>
            <person name="Hain T."/>
            <person name="Hauf J."/>
            <person name="Jackson D."/>
            <person name="Jones L.-M."/>
            <person name="Kaerst U."/>
            <person name="Kreft J."/>
            <person name="Kuhn M."/>
            <person name="Kunst F."/>
            <person name="Kurapkat G."/>
            <person name="Madueno E."/>
            <person name="Maitournam A."/>
            <person name="Mata Vicente J."/>
            <person name="Ng E."/>
            <person name="Nedjari H."/>
            <person name="Nordsiek G."/>
            <person name="Novella S."/>
            <person name="de Pablos B."/>
            <person name="Perez-Diaz J.-C."/>
            <person name="Purcell R."/>
            <person name="Remmel B."/>
            <person name="Rose M."/>
            <person name="Schlueter T."/>
            <person name="Simoes N."/>
            <person name="Tierrez A."/>
            <person name="Vazquez-Boland J.-A."/>
            <person name="Voss H."/>
            <person name="Wehland J."/>
            <person name="Cossart P."/>
        </authorList>
    </citation>
    <scope>NUCLEOTIDE SEQUENCE [LARGE SCALE GENOMIC DNA]</scope>
    <source>
        <strain>ATCC BAA-680 / CLIP 11262</strain>
    </source>
</reference>
<sequence>MKITSISVQQKNKERYNIFIDEKYNFSVDEEVLARYQLMKGKTLTEADIEEIKQADMVRKGLNKAINFLSHRVRSEKEIRDYLRKQEMEPFAVDEILKKLADMDYINDVEFAELYTKTQIKTTLKGPRTIERELVEKGLTREIISQVMEEYASDIQLENATKQAMKIMKRNNKSAKKMLQQKIITDLIQKGYSSEVAKMAAIEATSELDVADEADILQKQVEKTIRKNKRYKPSIAKQKTITSLMQKGFSYDTIQSYLTENEISFEEEE</sequence>
<accession>Q92AW7</accession>
<dbReference type="EMBL" id="AL596170">
    <property type="protein sequence ID" value="CAC97032.1"/>
    <property type="molecule type" value="Genomic_DNA"/>
</dbReference>
<dbReference type="PIR" id="AH1657">
    <property type="entry name" value="AH1657"/>
</dbReference>
<dbReference type="RefSeq" id="WP_010990961.1">
    <property type="nucleotide sequence ID" value="NC_003212.1"/>
</dbReference>
<dbReference type="SMR" id="Q92AW7"/>
<dbReference type="STRING" id="272626.gene:17566156"/>
<dbReference type="GeneID" id="93235138"/>
<dbReference type="KEGG" id="lin:lin1801"/>
<dbReference type="eggNOG" id="COG2137">
    <property type="taxonomic scope" value="Bacteria"/>
</dbReference>
<dbReference type="HOGENOM" id="CLU_066607_4_0_9"/>
<dbReference type="OrthoDB" id="5421057at2"/>
<dbReference type="Proteomes" id="UP000002513">
    <property type="component" value="Chromosome"/>
</dbReference>
<dbReference type="GO" id="GO:0005737">
    <property type="term" value="C:cytoplasm"/>
    <property type="evidence" value="ECO:0007669"/>
    <property type="project" value="UniProtKB-SubCell"/>
</dbReference>
<dbReference type="GO" id="GO:0006282">
    <property type="term" value="P:regulation of DNA repair"/>
    <property type="evidence" value="ECO:0007669"/>
    <property type="project" value="UniProtKB-UniRule"/>
</dbReference>
<dbReference type="Gene3D" id="1.10.10.10">
    <property type="entry name" value="Winged helix-like DNA-binding domain superfamily/Winged helix DNA-binding domain"/>
    <property type="match status" value="4"/>
</dbReference>
<dbReference type="HAMAP" id="MF_01114">
    <property type="entry name" value="RecX"/>
    <property type="match status" value="1"/>
</dbReference>
<dbReference type="InterPro" id="IPR053926">
    <property type="entry name" value="RecX_HTH_1st"/>
</dbReference>
<dbReference type="InterPro" id="IPR053924">
    <property type="entry name" value="RecX_HTH_2nd"/>
</dbReference>
<dbReference type="InterPro" id="IPR053925">
    <property type="entry name" value="RecX_HTH_3rd"/>
</dbReference>
<dbReference type="InterPro" id="IPR003783">
    <property type="entry name" value="Regulatory_RecX"/>
</dbReference>
<dbReference type="InterPro" id="IPR036388">
    <property type="entry name" value="WH-like_DNA-bd_sf"/>
</dbReference>
<dbReference type="NCBIfam" id="NF010733">
    <property type="entry name" value="PRK14135.1"/>
    <property type="match status" value="1"/>
</dbReference>
<dbReference type="PANTHER" id="PTHR33602">
    <property type="entry name" value="REGULATORY PROTEIN RECX FAMILY PROTEIN"/>
    <property type="match status" value="1"/>
</dbReference>
<dbReference type="PANTHER" id="PTHR33602:SF1">
    <property type="entry name" value="REGULATORY PROTEIN RECX FAMILY PROTEIN"/>
    <property type="match status" value="1"/>
</dbReference>
<dbReference type="Pfam" id="PF21982">
    <property type="entry name" value="RecX_HTH1"/>
    <property type="match status" value="1"/>
</dbReference>
<dbReference type="Pfam" id="PF02631">
    <property type="entry name" value="RecX_HTH2"/>
    <property type="match status" value="1"/>
</dbReference>
<dbReference type="Pfam" id="PF21981">
    <property type="entry name" value="RecX_HTH3"/>
    <property type="match status" value="1"/>
</dbReference>
<gene>
    <name type="primary">recX</name>
    <name type="ordered locus">lin1801</name>
</gene>
<name>RECX_LISIN</name>
<organism>
    <name type="scientific">Listeria innocua serovar 6a (strain ATCC BAA-680 / CLIP 11262)</name>
    <dbReference type="NCBI Taxonomy" id="272626"/>
    <lineage>
        <taxon>Bacteria</taxon>
        <taxon>Bacillati</taxon>
        <taxon>Bacillota</taxon>
        <taxon>Bacilli</taxon>
        <taxon>Bacillales</taxon>
        <taxon>Listeriaceae</taxon>
        <taxon>Listeria</taxon>
    </lineage>
</organism>
<keyword id="KW-0963">Cytoplasm</keyword>
<evidence type="ECO:0000250" key="1"/>
<evidence type="ECO:0000305" key="2"/>
<comment type="function">
    <text evidence="1">Modulates RecA activity.</text>
</comment>
<comment type="subcellular location">
    <subcellularLocation>
        <location evidence="2">Cytoplasm</location>
    </subcellularLocation>
</comment>
<comment type="similarity">
    <text evidence="2">Belongs to the RecX family.</text>
</comment>
<proteinExistence type="inferred from homology"/>
<feature type="chain" id="PRO_0000162444" description="Regulatory protein RecX">
    <location>
        <begin position="1"/>
        <end position="269"/>
    </location>
</feature>